<feature type="chain" id="PRO_0000344605" description="L-rhamnose mutarotase">
    <location>
        <begin position="1"/>
        <end position="104"/>
    </location>
</feature>
<feature type="active site" description="Proton donor" evidence="1">
    <location>
        <position position="22"/>
    </location>
</feature>
<feature type="binding site" evidence="1">
    <location>
        <position position="18"/>
    </location>
    <ligand>
        <name>substrate</name>
    </ligand>
</feature>
<feature type="binding site" evidence="1">
    <location>
        <position position="41"/>
    </location>
    <ligand>
        <name>substrate</name>
    </ligand>
</feature>
<feature type="binding site" evidence="1">
    <location>
        <begin position="76"/>
        <end position="77"/>
    </location>
    <ligand>
        <name>substrate</name>
    </ligand>
</feature>
<organism>
    <name type="scientific">Shigella dysenteriae serotype 1 (strain Sd197)</name>
    <dbReference type="NCBI Taxonomy" id="300267"/>
    <lineage>
        <taxon>Bacteria</taxon>
        <taxon>Pseudomonadati</taxon>
        <taxon>Pseudomonadota</taxon>
        <taxon>Gammaproteobacteria</taxon>
        <taxon>Enterobacterales</taxon>
        <taxon>Enterobacteriaceae</taxon>
        <taxon>Shigella</taxon>
    </lineage>
</organism>
<comment type="function">
    <text evidence="1">Involved in the anomeric conversion of L-rhamnose.</text>
</comment>
<comment type="catalytic activity">
    <reaction evidence="1">
        <text>alpha-L-rhamnose = beta-L-rhamnose</text>
        <dbReference type="Rhea" id="RHEA:25584"/>
        <dbReference type="ChEBI" id="CHEBI:27586"/>
        <dbReference type="ChEBI" id="CHEBI:27907"/>
        <dbReference type="EC" id="5.1.3.32"/>
    </reaction>
</comment>
<comment type="pathway">
    <text evidence="1">Carbohydrate metabolism; L-rhamnose metabolism.</text>
</comment>
<comment type="subunit">
    <text evidence="1">Homodimer.</text>
</comment>
<comment type="subcellular location">
    <subcellularLocation>
        <location evidence="1">Cytoplasm</location>
    </subcellularLocation>
</comment>
<comment type="similarity">
    <text evidence="1">Belongs to the rhamnose mutarotase family.</text>
</comment>
<proteinExistence type="inferred from homology"/>
<name>RHAM_SHIDS</name>
<evidence type="ECO:0000255" key="1">
    <source>
        <dbReference type="HAMAP-Rule" id="MF_01663"/>
    </source>
</evidence>
<accession>Q32A67</accession>
<reference key="1">
    <citation type="journal article" date="2005" name="Nucleic Acids Res.">
        <title>Genome dynamics and diversity of Shigella species, the etiologic agents of bacillary dysentery.</title>
        <authorList>
            <person name="Yang F."/>
            <person name="Yang J."/>
            <person name="Zhang X."/>
            <person name="Chen L."/>
            <person name="Jiang Y."/>
            <person name="Yan Y."/>
            <person name="Tang X."/>
            <person name="Wang J."/>
            <person name="Xiong Z."/>
            <person name="Dong J."/>
            <person name="Xue Y."/>
            <person name="Zhu Y."/>
            <person name="Xu X."/>
            <person name="Sun L."/>
            <person name="Chen S."/>
            <person name="Nie H."/>
            <person name="Peng J."/>
            <person name="Xu J."/>
            <person name="Wang Y."/>
            <person name="Yuan Z."/>
            <person name="Wen Y."/>
            <person name="Yao Z."/>
            <person name="Shen Y."/>
            <person name="Qiang B."/>
            <person name="Hou Y."/>
            <person name="Yu J."/>
            <person name="Jin Q."/>
        </authorList>
    </citation>
    <scope>NUCLEOTIDE SEQUENCE [LARGE SCALE GENOMIC DNA]</scope>
    <source>
        <strain>Sd197</strain>
    </source>
</reference>
<gene>
    <name evidence="1" type="primary">rhaM</name>
    <name type="ordered locus">SDY_3845</name>
</gene>
<dbReference type="EC" id="5.1.3.32" evidence="1"/>
<dbReference type="EMBL" id="CP000034">
    <property type="protein sequence ID" value="ABB63788.1"/>
    <property type="molecule type" value="Genomic_DNA"/>
</dbReference>
<dbReference type="RefSeq" id="WP_000619496.1">
    <property type="nucleotide sequence ID" value="NC_007606.1"/>
</dbReference>
<dbReference type="RefSeq" id="YP_405279.1">
    <property type="nucleotide sequence ID" value="NC_007606.1"/>
</dbReference>
<dbReference type="SMR" id="Q32A67"/>
<dbReference type="STRING" id="300267.SDY_3845"/>
<dbReference type="EnsemblBacteria" id="ABB63788">
    <property type="protein sequence ID" value="ABB63788"/>
    <property type="gene ID" value="SDY_3845"/>
</dbReference>
<dbReference type="KEGG" id="sdy:SDY_3845"/>
<dbReference type="PATRIC" id="fig|300267.13.peg.4542"/>
<dbReference type="HOGENOM" id="CLU_100689_2_0_6"/>
<dbReference type="UniPathway" id="UPA00125"/>
<dbReference type="Proteomes" id="UP000002716">
    <property type="component" value="Chromosome"/>
</dbReference>
<dbReference type="GO" id="GO:0005737">
    <property type="term" value="C:cytoplasm"/>
    <property type="evidence" value="ECO:0007669"/>
    <property type="project" value="UniProtKB-SubCell"/>
</dbReference>
<dbReference type="GO" id="GO:0062192">
    <property type="term" value="F:L-rhamnose mutarotase activity"/>
    <property type="evidence" value="ECO:0007669"/>
    <property type="project" value="UniProtKB-EC"/>
</dbReference>
<dbReference type="GO" id="GO:0019301">
    <property type="term" value="P:rhamnose catabolic process"/>
    <property type="evidence" value="ECO:0007669"/>
    <property type="project" value="TreeGrafter"/>
</dbReference>
<dbReference type="FunFam" id="3.30.70.100:FF:000013">
    <property type="entry name" value="L-rhamnose mutarotase"/>
    <property type="match status" value="1"/>
</dbReference>
<dbReference type="Gene3D" id="3.30.70.100">
    <property type="match status" value="1"/>
</dbReference>
<dbReference type="HAMAP" id="MF_01663">
    <property type="entry name" value="L_rham_rotase"/>
    <property type="match status" value="1"/>
</dbReference>
<dbReference type="InterPro" id="IPR011008">
    <property type="entry name" value="Dimeric_a/b-barrel"/>
</dbReference>
<dbReference type="InterPro" id="IPR013448">
    <property type="entry name" value="L-rhamnose_mutarotase"/>
</dbReference>
<dbReference type="InterPro" id="IPR008000">
    <property type="entry name" value="Rham/fucose_mutarotase"/>
</dbReference>
<dbReference type="NCBIfam" id="TIGR02625">
    <property type="entry name" value="YiiL_rotase"/>
    <property type="match status" value="1"/>
</dbReference>
<dbReference type="PANTHER" id="PTHR34389">
    <property type="entry name" value="L-RHAMNOSE MUTAROTASE"/>
    <property type="match status" value="1"/>
</dbReference>
<dbReference type="PANTHER" id="PTHR34389:SF2">
    <property type="entry name" value="L-RHAMNOSE MUTAROTASE"/>
    <property type="match status" value="1"/>
</dbReference>
<dbReference type="Pfam" id="PF05336">
    <property type="entry name" value="rhaM"/>
    <property type="match status" value="1"/>
</dbReference>
<dbReference type="SUPFAM" id="SSF54909">
    <property type="entry name" value="Dimeric alpha+beta barrel"/>
    <property type="match status" value="1"/>
</dbReference>
<protein>
    <recommendedName>
        <fullName evidence="1">L-rhamnose mutarotase</fullName>
        <ecNumber evidence="1">5.1.3.32</ecNumber>
    </recommendedName>
    <alternativeName>
        <fullName evidence="1">Rhamnose 1-epimerase</fullName>
    </alternativeName>
    <alternativeName>
        <fullName evidence="1">Type-3 mutarotase</fullName>
    </alternativeName>
</protein>
<sequence>MIRKAFVMQVNPDAHEEYQRRHNPIWPELEAVLKSHGAHNYAIYLDKARNLLFAMVEIESEERWNAVASTEICQRWWKYMTDVMPANPDNSPVSSELQEVFYLP</sequence>
<keyword id="KW-0119">Carbohydrate metabolism</keyword>
<keyword id="KW-0963">Cytoplasm</keyword>
<keyword id="KW-0413">Isomerase</keyword>
<keyword id="KW-1185">Reference proteome</keyword>
<keyword id="KW-0684">Rhamnose metabolism</keyword>